<organism>
    <name type="scientific">Halalkalibacterium halodurans (strain ATCC BAA-125 / DSM 18197 / FERM 7344 / JCM 9153 / C-125)</name>
    <name type="common">Bacillus halodurans</name>
    <dbReference type="NCBI Taxonomy" id="272558"/>
    <lineage>
        <taxon>Bacteria</taxon>
        <taxon>Bacillati</taxon>
        <taxon>Bacillota</taxon>
        <taxon>Bacilli</taxon>
        <taxon>Bacillales</taxon>
        <taxon>Bacillaceae</taxon>
        <taxon>Halalkalibacterium (ex Joshi et al. 2022)</taxon>
    </lineage>
</organism>
<feature type="chain" id="PRO_0000115069" description="DNA mismatch repair protein MutS">
    <location>
        <begin position="1"/>
        <end position="865"/>
    </location>
</feature>
<feature type="region of interest" description="Disordered" evidence="2">
    <location>
        <begin position="814"/>
        <end position="833"/>
    </location>
</feature>
<feature type="binding site" evidence="1">
    <location>
        <begin position="605"/>
        <end position="612"/>
    </location>
    <ligand>
        <name>ATP</name>
        <dbReference type="ChEBI" id="CHEBI:30616"/>
    </ligand>
</feature>
<sequence>MALQTPMMKQYLEIKAQYKDAFLFFRLGDFYELFLDDAVKAAQELEITLTGRGKGEERIPMCGVPYHSADHYISRLLEKGYKIAICEQVEDPKNAKGVVKREVIKLITPGTIMDGKLIVEKENNFLCAVTRFEDQSYGIARADLTTGESRVSLVSEQDDLFHELASSSIKEVVLSPGWTEEDAHRLRQSLSVTLSEEEAEDLPKGYESLCENVEQPKLLRAFGRLLQYLLRTQKRSLEHLQPVQYDPPNEVMKIDLHSRRNLELVETLREKKKKGSLLWAVDETVTAMGGRLLKQWVERPLLSKKEIERRQGLVQSFLDHYFEREELRDELRHVYDLERLVGKVAYGNVNARELVQLRKSLQRIPAIFALVEKIGNQDVNERLQTIDRCESLVDLLEHSLVDDPPVSIKEGGMIRDGFHKELDTYRDASRNGKSWIAELEQKEREATGIKSLKIGYNKVFGYYIEVTKANIHLLEEGRYERKQTLTNAERYVTPELKEKEALILNAEESIVQLEYDLFLQVREQVKDYIRPLQALAQMISELDVIQGFATVSETHHYVRPALQEDRAIAIKGGRHPVVERVIPNGEYVANDVDMKDGRSILLITGPNMAGKSTYMRQLALIAIMGQIGCFVPADEARLPIFDQVFTRIGAADDLASGQSTFMVEMLETKYALQKATQNSLILLDEIGRGTSTYDGMALAQAIIEYIHDEIRAKTLFSTHYHELTALEKELSDVKNVHVSAVEEQGTVVFLHKVVDGQADRSYGIYVAELAGLPNVVTERAETLLAELEGEKEIVASEKEVASTNEPTQLSLFEPEPLEAYKPKGNKQPLSDEEKTVLHDLQSVDVLNTTPLEAIRLLNQWQQKLR</sequence>
<proteinExistence type="inferred from homology"/>
<protein>
    <recommendedName>
        <fullName evidence="1">DNA mismatch repair protein MutS</fullName>
    </recommendedName>
</protein>
<keyword id="KW-0067">ATP-binding</keyword>
<keyword id="KW-0227">DNA damage</keyword>
<keyword id="KW-0234">DNA repair</keyword>
<keyword id="KW-0238">DNA-binding</keyword>
<keyword id="KW-0547">Nucleotide-binding</keyword>
<keyword id="KW-1185">Reference proteome</keyword>
<name>MUTS_HALH5</name>
<dbReference type="EMBL" id="BA000004">
    <property type="protein sequence ID" value="BAB06088.1"/>
    <property type="molecule type" value="Genomic_DNA"/>
</dbReference>
<dbReference type="PIR" id="A83946">
    <property type="entry name" value="A83946"/>
</dbReference>
<dbReference type="RefSeq" id="WP_010898523.1">
    <property type="nucleotide sequence ID" value="NC_002570.2"/>
</dbReference>
<dbReference type="SMR" id="Q9KAC0"/>
<dbReference type="STRING" id="272558.gene:10728267"/>
<dbReference type="GeneID" id="87597889"/>
<dbReference type="KEGG" id="bha:BH2369"/>
<dbReference type="eggNOG" id="COG0249">
    <property type="taxonomic scope" value="Bacteria"/>
</dbReference>
<dbReference type="HOGENOM" id="CLU_002472_3_1_9"/>
<dbReference type="OrthoDB" id="9802448at2"/>
<dbReference type="Proteomes" id="UP000001258">
    <property type="component" value="Chromosome"/>
</dbReference>
<dbReference type="GO" id="GO:0005829">
    <property type="term" value="C:cytosol"/>
    <property type="evidence" value="ECO:0007669"/>
    <property type="project" value="TreeGrafter"/>
</dbReference>
<dbReference type="GO" id="GO:0005524">
    <property type="term" value="F:ATP binding"/>
    <property type="evidence" value="ECO:0007669"/>
    <property type="project" value="UniProtKB-UniRule"/>
</dbReference>
<dbReference type="GO" id="GO:0140664">
    <property type="term" value="F:ATP-dependent DNA damage sensor activity"/>
    <property type="evidence" value="ECO:0007669"/>
    <property type="project" value="InterPro"/>
</dbReference>
<dbReference type="GO" id="GO:0003684">
    <property type="term" value="F:damaged DNA binding"/>
    <property type="evidence" value="ECO:0007669"/>
    <property type="project" value="UniProtKB-UniRule"/>
</dbReference>
<dbReference type="GO" id="GO:0030983">
    <property type="term" value="F:mismatched DNA binding"/>
    <property type="evidence" value="ECO:0007669"/>
    <property type="project" value="InterPro"/>
</dbReference>
<dbReference type="GO" id="GO:0006298">
    <property type="term" value="P:mismatch repair"/>
    <property type="evidence" value="ECO:0007669"/>
    <property type="project" value="UniProtKB-UniRule"/>
</dbReference>
<dbReference type="CDD" id="cd03284">
    <property type="entry name" value="ABC_MutS1"/>
    <property type="match status" value="1"/>
</dbReference>
<dbReference type="FunFam" id="1.10.1420.10:FF:000007">
    <property type="entry name" value="DNA mismatch repair protein MutS"/>
    <property type="match status" value="1"/>
</dbReference>
<dbReference type="FunFam" id="3.40.1170.10:FF:000001">
    <property type="entry name" value="DNA mismatch repair protein MutS"/>
    <property type="match status" value="1"/>
</dbReference>
<dbReference type="FunFam" id="3.40.50.300:FF:000896">
    <property type="entry name" value="DNA mismatch repair protein MutS"/>
    <property type="match status" value="1"/>
</dbReference>
<dbReference type="Gene3D" id="1.10.1420.10">
    <property type="match status" value="2"/>
</dbReference>
<dbReference type="Gene3D" id="3.40.1170.10">
    <property type="entry name" value="DNA repair protein MutS, domain I"/>
    <property type="match status" value="1"/>
</dbReference>
<dbReference type="Gene3D" id="3.30.420.110">
    <property type="entry name" value="MutS, connector domain"/>
    <property type="match status" value="1"/>
</dbReference>
<dbReference type="Gene3D" id="3.40.50.300">
    <property type="entry name" value="P-loop containing nucleotide triphosphate hydrolases"/>
    <property type="match status" value="1"/>
</dbReference>
<dbReference type="HAMAP" id="MF_00096">
    <property type="entry name" value="MutS"/>
    <property type="match status" value="1"/>
</dbReference>
<dbReference type="InterPro" id="IPR005748">
    <property type="entry name" value="DNA_mismatch_repair_MutS"/>
</dbReference>
<dbReference type="InterPro" id="IPR007695">
    <property type="entry name" value="DNA_mismatch_repair_MutS-lik_N"/>
</dbReference>
<dbReference type="InterPro" id="IPR017261">
    <property type="entry name" value="DNA_mismatch_repair_MutS/MSH"/>
</dbReference>
<dbReference type="InterPro" id="IPR000432">
    <property type="entry name" value="DNA_mismatch_repair_MutS_C"/>
</dbReference>
<dbReference type="InterPro" id="IPR007861">
    <property type="entry name" value="DNA_mismatch_repair_MutS_clamp"/>
</dbReference>
<dbReference type="InterPro" id="IPR007696">
    <property type="entry name" value="DNA_mismatch_repair_MutS_core"/>
</dbReference>
<dbReference type="InterPro" id="IPR016151">
    <property type="entry name" value="DNA_mismatch_repair_MutS_N"/>
</dbReference>
<dbReference type="InterPro" id="IPR036187">
    <property type="entry name" value="DNA_mismatch_repair_MutS_sf"/>
</dbReference>
<dbReference type="InterPro" id="IPR007860">
    <property type="entry name" value="DNA_mmatch_repair_MutS_con_dom"/>
</dbReference>
<dbReference type="InterPro" id="IPR045076">
    <property type="entry name" value="MutS"/>
</dbReference>
<dbReference type="InterPro" id="IPR036678">
    <property type="entry name" value="MutS_con_dom_sf"/>
</dbReference>
<dbReference type="InterPro" id="IPR027417">
    <property type="entry name" value="P-loop_NTPase"/>
</dbReference>
<dbReference type="NCBIfam" id="TIGR01070">
    <property type="entry name" value="mutS1"/>
    <property type="match status" value="1"/>
</dbReference>
<dbReference type="NCBIfam" id="NF003810">
    <property type="entry name" value="PRK05399.1"/>
    <property type="match status" value="1"/>
</dbReference>
<dbReference type="PANTHER" id="PTHR11361:SF34">
    <property type="entry name" value="DNA MISMATCH REPAIR PROTEIN MSH1, MITOCHONDRIAL"/>
    <property type="match status" value="1"/>
</dbReference>
<dbReference type="PANTHER" id="PTHR11361">
    <property type="entry name" value="DNA MISMATCH REPAIR PROTEIN MUTS FAMILY MEMBER"/>
    <property type="match status" value="1"/>
</dbReference>
<dbReference type="Pfam" id="PF01624">
    <property type="entry name" value="MutS_I"/>
    <property type="match status" value="1"/>
</dbReference>
<dbReference type="Pfam" id="PF05188">
    <property type="entry name" value="MutS_II"/>
    <property type="match status" value="1"/>
</dbReference>
<dbReference type="Pfam" id="PF05192">
    <property type="entry name" value="MutS_III"/>
    <property type="match status" value="1"/>
</dbReference>
<dbReference type="Pfam" id="PF05190">
    <property type="entry name" value="MutS_IV"/>
    <property type="match status" value="1"/>
</dbReference>
<dbReference type="Pfam" id="PF00488">
    <property type="entry name" value="MutS_V"/>
    <property type="match status" value="1"/>
</dbReference>
<dbReference type="PIRSF" id="PIRSF037677">
    <property type="entry name" value="DNA_mis_repair_Msh6"/>
    <property type="match status" value="1"/>
</dbReference>
<dbReference type="SMART" id="SM00534">
    <property type="entry name" value="MUTSac"/>
    <property type="match status" value="1"/>
</dbReference>
<dbReference type="SMART" id="SM00533">
    <property type="entry name" value="MUTSd"/>
    <property type="match status" value="1"/>
</dbReference>
<dbReference type="SUPFAM" id="SSF55271">
    <property type="entry name" value="DNA repair protein MutS, domain I"/>
    <property type="match status" value="1"/>
</dbReference>
<dbReference type="SUPFAM" id="SSF53150">
    <property type="entry name" value="DNA repair protein MutS, domain II"/>
    <property type="match status" value="1"/>
</dbReference>
<dbReference type="SUPFAM" id="SSF48334">
    <property type="entry name" value="DNA repair protein MutS, domain III"/>
    <property type="match status" value="1"/>
</dbReference>
<dbReference type="SUPFAM" id="SSF52540">
    <property type="entry name" value="P-loop containing nucleoside triphosphate hydrolases"/>
    <property type="match status" value="1"/>
</dbReference>
<dbReference type="PROSITE" id="PS00486">
    <property type="entry name" value="DNA_MISMATCH_REPAIR_2"/>
    <property type="match status" value="1"/>
</dbReference>
<accession>Q9KAC0</accession>
<evidence type="ECO:0000255" key="1">
    <source>
        <dbReference type="HAMAP-Rule" id="MF_00096"/>
    </source>
</evidence>
<evidence type="ECO:0000256" key="2">
    <source>
        <dbReference type="SAM" id="MobiDB-lite"/>
    </source>
</evidence>
<reference key="1">
    <citation type="journal article" date="2000" name="Nucleic Acids Res.">
        <title>Complete genome sequence of the alkaliphilic bacterium Bacillus halodurans and genomic sequence comparison with Bacillus subtilis.</title>
        <authorList>
            <person name="Takami H."/>
            <person name="Nakasone K."/>
            <person name="Takaki Y."/>
            <person name="Maeno G."/>
            <person name="Sasaki R."/>
            <person name="Masui N."/>
            <person name="Fuji F."/>
            <person name="Hirama C."/>
            <person name="Nakamura Y."/>
            <person name="Ogasawara N."/>
            <person name="Kuhara S."/>
            <person name="Horikoshi K."/>
        </authorList>
    </citation>
    <scope>NUCLEOTIDE SEQUENCE [LARGE SCALE GENOMIC DNA]</scope>
    <source>
        <strain>ATCC BAA-125 / DSM 18197 / FERM 7344 / JCM 9153 / C-125</strain>
    </source>
</reference>
<gene>
    <name evidence="1" type="primary">mutS</name>
    <name type="ordered locus">BH2369</name>
</gene>
<comment type="function">
    <text evidence="1">This protein is involved in the repair of mismatches in DNA. It is possible that it carries out the mismatch recognition step. This protein has a weak ATPase activity.</text>
</comment>
<comment type="similarity">
    <text evidence="1">Belongs to the DNA mismatch repair MutS family.</text>
</comment>